<gene>
    <name evidence="6" type="primary">pvdT</name>
    <name evidence="10" type="ordered locus">PP_4210</name>
</gene>
<keyword id="KW-0046">Antibiotic resistance</keyword>
<keyword id="KW-0067">ATP-binding</keyword>
<keyword id="KW-0997">Cell inner membrane</keyword>
<keyword id="KW-1003">Cell membrane</keyword>
<keyword id="KW-0472">Membrane</keyword>
<keyword id="KW-0547">Nucleotide-binding</keyword>
<keyword id="KW-1185">Reference proteome</keyword>
<keyword id="KW-1278">Translocase</keyword>
<keyword id="KW-0812">Transmembrane</keyword>
<keyword id="KW-1133">Transmembrane helix</keyword>
<keyword id="KW-0813">Transport</keyword>
<accession>Q88F88</accession>
<protein>
    <recommendedName>
        <fullName evidence="7">Pyoverdine export ATP-binding/permease protein PvdT</fullName>
        <ecNumber evidence="9">7.6.2.-</ecNumber>
    </recommendedName>
</protein>
<organism>
    <name type="scientific">Pseudomonas putida (strain ATCC 47054 / DSM 6125 / CFBP 8728 / NCIMB 11950 / KT2440)</name>
    <dbReference type="NCBI Taxonomy" id="160488"/>
    <lineage>
        <taxon>Bacteria</taxon>
        <taxon>Pseudomonadati</taxon>
        <taxon>Pseudomonadota</taxon>
        <taxon>Gammaproteobacteria</taxon>
        <taxon>Pseudomonadales</taxon>
        <taxon>Pseudomonadaceae</taxon>
        <taxon>Pseudomonas</taxon>
    </lineage>
</organism>
<sequence length="654" mass="69687">MATPLIELCDIRKAYGGVDTPRVEVLRGISLRVHAGEFVAIVGASGSGKSTLMNILGCLDRPSAGSYRFAGKDVAELDSDELAWLRREAFGFVFQGYHLIPSGSAQENVEMPAIYAGTPAAERQARASALLGRLGLASRTANRPHQLSGGQQQRVSIARALMNGGHIILADEPTGALDSHSGAEVMALLDELASQGHVIILITHDREVAARAHRVIEIRDGLVISDSAADQPPAHAHKGIQAEELRQRLDRGATQHGAWKGELLESLQAAWRVMWINRFRTALTLLGIIIGVASVVVMLAVGEGSKRQVMAQMAAFGSNILYLNGSPPTLREPAGRITLDDVAAIGELPQVKHIMPVLGEKMMVRHGNNSQQFYVGGNNTFFPEIFNWPAVEGSFFTETDEASSAAVAVIGQKVREKMLAPGSNPIGQYLLIGNVPFQVVGILAGKGASSGDQDSDGRIVVPFSAAAIRLFGHRDPDYIAIAARDSGQVKDTEAAIDRLLRQRHQGKHDFELTNDAALIQAEARTQNSLSLMLGAIAAISLLVGGIGVMNIMLMTVRERTREIGIRMATGARQRDILRQFLSEAIMLSMVGGLTGIALALVVGASLTLADIAVAFALPAIVGAFACAVITGVVFGFMPARKAARLDPVKALTSE</sequence>
<reference key="1">
    <citation type="journal article" date="2002" name="Environ. Microbiol.">
        <title>Complete genome sequence and comparative analysis of the metabolically versatile Pseudomonas putida KT2440.</title>
        <authorList>
            <person name="Nelson K.E."/>
            <person name="Weinel C."/>
            <person name="Paulsen I.T."/>
            <person name="Dodson R.J."/>
            <person name="Hilbert H."/>
            <person name="Martins dos Santos V.A.P."/>
            <person name="Fouts D.E."/>
            <person name="Gill S.R."/>
            <person name="Pop M."/>
            <person name="Holmes M."/>
            <person name="Brinkac L.M."/>
            <person name="Beanan M.J."/>
            <person name="DeBoy R.T."/>
            <person name="Daugherty S.C."/>
            <person name="Kolonay J.F."/>
            <person name="Madupu R."/>
            <person name="Nelson W.C."/>
            <person name="White O."/>
            <person name="Peterson J.D."/>
            <person name="Khouri H.M."/>
            <person name="Hance I."/>
            <person name="Chris Lee P."/>
            <person name="Holtzapple E.K."/>
            <person name="Scanlan D."/>
            <person name="Tran K."/>
            <person name="Moazzez A."/>
            <person name="Utterback T.R."/>
            <person name="Rizzo M."/>
            <person name="Lee K."/>
            <person name="Kosack D."/>
            <person name="Moestl D."/>
            <person name="Wedler H."/>
            <person name="Lauber J."/>
            <person name="Stjepandic D."/>
            <person name="Hoheisel J."/>
            <person name="Straetz M."/>
            <person name="Heim S."/>
            <person name="Kiewitz C."/>
            <person name="Eisen J.A."/>
            <person name="Timmis K.N."/>
            <person name="Duesterhoeft A."/>
            <person name="Tuemmler B."/>
            <person name="Fraser C.M."/>
        </authorList>
    </citation>
    <scope>NUCLEOTIDE SEQUENCE [LARGE SCALE GENOMIC DNA]</scope>
    <source>
        <strain>ATCC 47054 / DSM 6125 / CFBP 8728 / NCIMB 11950 / KT2440</strain>
    </source>
</reference>
<reference key="2">
    <citation type="journal article" date="2019" name="Environ. Microbiol. Rep.">
        <title>PvdRT-OpmQ and MdtABC-OpmB efflux systems are involved in pyoverdine secretion in Pseudomonas putida KT2440.</title>
        <authorList>
            <person name="Henriquez T."/>
            <person name="Stein N.V."/>
            <person name="Jung H."/>
        </authorList>
    </citation>
    <scope>FUNCTION</scope>
    <scope>INDUCTION</scope>
    <scope>DISRUPTION PHENOTYPE</scope>
    <source>
        <strain>ATCC 47054 / DSM 6125 / CFBP 8728 / NCIMB 11950 / KT2440</strain>
    </source>
</reference>
<reference key="3">
    <citation type="journal article" date="2023" name="FEBS Lett.">
        <title>The ABC transporter family efflux pump PvdRT-OpmQ of Pseudomonas putida KT2440: purification and initial characterization.</title>
        <authorList>
            <person name="Stein N.V."/>
            <person name="Eder M."/>
            <person name="Brameyer S."/>
            <person name="Schwenkert S."/>
            <person name="Jung H."/>
        </authorList>
    </citation>
    <scope>FUNCTION</scope>
    <scope>ATPASE ACTIVITY</scope>
    <scope>ACTIVITY REGULATION</scope>
    <scope>BIOPHYSICOCHEMICAL PROPERTIES</scope>
    <scope>SUBUNIT</scope>
    <scope>SUBCELLULAR LOCATION</scope>
    <source>
        <strain>ATCC 47054 / DSM 6125 / CFBP 8728 / NCIMB 11950 / KT2440</strain>
    </source>
</reference>
<feature type="chain" id="PRO_0000269961" description="Pyoverdine export ATP-binding/permease protein PvdT">
    <location>
        <begin position="1"/>
        <end position="654"/>
    </location>
</feature>
<feature type="transmembrane region" description="Helical" evidence="2">
    <location>
        <begin position="282"/>
        <end position="302"/>
    </location>
</feature>
<feature type="transmembrane region" description="Helical" evidence="2">
    <location>
        <begin position="529"/>
        <end position="549"/>
    </location>
</feature>
<feature type="transmembrane region" description="Helical" evidence="2">
    <location>
        <begin position="584"/>
        <end position="604"/>
    </location>
</feature>
<feature type="transmembrane region" description="Helical" evidence="2">
    <location>
        <begin position="614"/>
        <end position="634"/>
    </location>
</feature>
<feature type="domain" description="ABC transporter" evidence="3">
    <location>
        <begin position="6"/>
        <end position="245"/>
    </location>
</feature>
<feature type="binding site" evidence="3">
    <location>
        <begin position="43"/>
        <end position="50"/>
    </location>
    <ligand>
        <name>ATP</name>
        <dbReference type="ChEBI" id="CHEBI:30616"/>
    </ligand>
</feature>
<comment type="function">
    <text evidence="1 4 5">Part of the tripartite efflux system PvdRT-OpmQ required for the secretion into the extracellular milieu of the siderophore pyoverdine (PVD), which is involved in iron acquisition (PubMed:30346656, PubMed:36807028). This subunit binds PVD and drives its secretion by hydrolyzing ATP (PubMed:36807028). The system is responsible for export of newly synthesized PVD after the final steps of biosynthesis have taken place in the periplasm (By similarity). It is also responsible for recycling of PVD after internalization of ferri-PVD into the periplasm by the outer-membrane receptor FpvA and release of iron from PVD, thus making PVD available for new cycles of iron uptake (By similarity). Contributes to resistance against ampicillin (PubMed:30346656).</text>
</comment>
<comment type="activity regulation">
    <text evidence="5">Has a basal ATPase activity that is stimulated by PvdR (PubMed:36807028). In vitro, interaction with PVD influences the affinity of PvdT to PvdR (PubMed:36807028).</text>
</comment>
<comment type="biophysicochemical properties">
    <kinetics>
        <KM evidence="5">0.164 mM for ATP</KM>
        <KM evidence="5">0.064 mM for ATP (in the presence of pyoverdine)</KM>
        <KM evidence="5">2.58 mM for ATP (in the presence of PvdR)</KM>
        <KM evidence="5">1.3 mM for ATP (in the presence of pyoverdine and PvdR)</KM>
        <Vmax evidence="5">9.91 nmol/min/mg enzyme with ATP as substrate</Vmax>
        <Vmax evidence="5">6.43 nmol/min/mg enzyme with ATP as substrate (in the presence of pyoverdine)</Vmax>
        <Vmax evidence="5">69.97 nmol/min/mg enzyme with ATP as substrate (in the presence of PvdR)</Vmax>
        <Vmax evidence="5">40.41 nmol/min/mg enzyme with ATP as substrate (in the presence of pyoverdine and PvdR)</Vmax>
        <text evidence="5">kcat is 0.011 sec(-1) with ATP as substrate. kcat is 0.007 sec(-1) with ATP as substrate (in the presence of pyoverdine). kcat is 0.08 sec(-1) with ATP as substrate (in the presence of PvdR). kcat is 0.05 sec(-1) with ATP as substrate (in the presence of pyoverdine and PvdR).</text>
    </kinetics>
</comment>
<comment type="subunit">
    <text evidence="5 8">Part of the tripartite efflux system PvdRT-OpmQ, which is composed of an inner membrane component with both ATPase and permease domains, PvdT, a periplasmic membrane fusion protein, PvdR, and an outer membrane component, OpmQ.</text>
</comment>
<comment type="subcellular location">
    <subcellularLocation>
        <location evidence="5">Cell inner membrane</location>
        <topology evidence="2">Multi-pass membrane protein</topology>
    </subcellularLocation>
</comment>
<comment type="induction">
    <text evidence="4">Expression is stimulated by iron limitation.</text>
</comment>
<comment type="disruption phenotype">
    <text evidence="4">Deletion of pvdRT-opmQ leads to reduced amounts of PVD in the medium and decreased growth under iron limitation (PubMed:30346656). Deletion of both PvdRT-OpmQ and MdtABC-OpmB systems strongly affects growth under iron limitation as well as PVD secretion (PubMed:30346656).</text>
</comment>
<comment type="similarity">
    <text evidence="7">Belongs to the ABC transporter superfamily. Macrolide exporter (TC 3.A.1.122) family.</text>
</comment>
<proteinExistence type="evidence at protein level"/>
<name>PVDT_PSEPK</name>
<evidence type="ECO:0000250" key="1">
    <source>
        <dbReference type="UniProtKB" id="Q9I191"/>
    </source>
</evidence>
<evidence type="ECO:0000255" key="2"/>
<evidence type="ECO:0000255" key="3">
    <source>
        <dbReference type="PROSITE-ProRule" id="PRU00434"/>
    </source>
</evidence>
<evidence type="ECO:0000269" key="4">
    <source>
    </source>
</evidence>
<evidence type="ECO:0000269" key="5">
    <source>
    </source>
</evidence>
<evidence type="ECO:0000303" key="6">
    <source>
    </source>
</evidence>
<evidence type="ECO:0000305" key="7"/>
<evidence type="ECO:0000305" key="8">
    <source>
    </source>
</evidence>
<evidence type="ECO:0000305" key="9">
    <source>
    </source>
</evidence>
<evidence type="ECO:0000312" key="10">
    <source>
        <dbReference type="EMBL" id="AAN69791.1"/>
    </source>
</evidence>
<dbReference type="EC" id="7.6.2.-" evidence="9"/>
<dbReference type="EMBL" id="AE015451">
    <property type="protein sequence ID" value="AAN69791.1"/>
    <property type="molecule type" value="Genomic_DNA"/>
</dbReference>
<dbReference type="RefSeq" id="NP_746327.1">
    <property type="nucleotide sequence ID" value="NC_002947.4"/>
</dbReference>
<dbReference type="RefSeq" id="WP_010954965.1">
    <property type="nucleotide sequence ID" value="NZ_CP169744.1"/>
</dbReference>
<dbReference type="SMR" id="Q88F88"/>
<dbReference type="STRING" id="160488.PP_4210"/>
<dbReference type="PaxDb" id="160488-PP_4210"/>
<dbReference type="KEGG" id="ppu:PP_4210"/>
<dbReference type="PATRIC" id="fig|160488.4.peg.4478"/>
<dbReference type="eggNOG" id="COG0577">
    <property type="taxonomic scope" value="Bacteria"/>
</dbReference>
<dbReference type="eggNOG" id="COG1136">
    <property type="taxonomic scope" value="Bacteria"/>
</dbReference>
<dbReference type="HOGENOM" id="CLU_000604_78_2_6"/>
<dbReference type="OrthoDB" id="9770036at2"/>
<dbReference type="PhylomeDB" id="Q88F88"/>
<dbReference type="BioCyc" id="PPUT160488:G1G01-4479-MONOMER"/>
<dbReference type="Proteomes" id="UP000000556">
    <property type="component" value="Chromosome"/>
</dbReference>
<dbReference type="GO" id="GO:0005886">
    <property type="term" value="C:plasma membrane"/>
    <property type="evidence" value="ECO:0007669"/>
    <property type="project" value="UniProtKB-SubCell"/>
</dbReference>
<dbReference type="GO" id="GO:0005524">
    <property type="term" value="F:ATP binding"/>
    <property type="evidence" value="ECO:0007669"/>
    <property type="project" value="UniProtKB-KW"/>
</dbReference>
<dbReference type="GO" id="GO:0016887">
    <property type="term" value="F:ATP hydrolysis activity"/>
    <property type="evidence" value="ECO:0007669"/>
    <property type="project" value="InterPro"/>
</dbReference>
<dbReference type="GO" id="GO:0022857">
    <property type="term" value="F:transmembrane transporter activity"/>
    <property type="evidence" value="ECO:0007669"/>
    <property type="project" value="TreeGrafter"/>
</dbReference>
<dbReference type="GO" id="GO:0046677">
    <property type="term" value="P:response to antibiotic"/>
    <property type="evidence" value="ECO:0007669"/>
    <property type="project" value="UniProtKB-KW"/>
</dbReference>
<dbReference type="CDD" id="cd03255">
    <property type="entry name" value="ABC_MJ0796_LolCDE_FtsE"/>
    <property type="match status" value="1"/>
</dbReference>
<dbReference type="FunFam" id="3.40.50.300:FF:000032">
    <property type="entry name" value="Export ABC transporter ATP-binding protein"/>
    <property type="match status" value="1"/>
</dbReference>
<dbReference type="Gene3D" id="3.40.50.300">
    <property type="entry name" value="P-loop containing nucleotide triphosphate hydrolases"/>
    <property type="match status" value="1"/>
</dbReference>
<dbReference type="InterPro" id="IPR003593">
    <property type="entry name" value="AAA+_ATPase"/>
</dbReference>
<dbReference type="InterPro" id="IPR003838">
    <property type="entry name" value="ABC3_permease_C"/>
</dbReference>
<dbReference type="InterPro" id="IPR003439">
    <property type="entry name" value="ABC_transporter-like_ATP-bd"/>
</dbReference>
<dbReference type="InterPro" id="IPR017871">
    <property type="entry name" value="ABC_transporter-like_CS"/>
</dbReference>
<dbReference type="InterPro" id="IPR017911">
    <property type="entry name" value="MacB-like_ATP-bd"/>
</dbReference>
<dbReference type="InterPro" id="IPR025857">
    <property type="entry name" value="MacB_PCD"/>
</dbReference>
<dbReference type="InterPro" id="IPR050250">
    <property type="entry name" value="Macrolide_Exporter_MacB"/>
</dbReference>
<dbReference type="InterPro" id="IPR027417">
    <property type="entry name" value="P-loop_NTPase"/>
</dbReference>
<dbReference type="PANTHER" id="PTHR30572:SF14">
    <property type="entry name" value="MACROLIDE EXPORT ATP-BINDING_PERMEASE PROTEIN MACB"/>
    <property type="match status" value="1"/>
</dbReference>
<dbReference type="PANTHER" id="PTHR30572">
    <property type="entry name" value="MEMBRANE COMPONENT OF TRANSPORTER-RELATED"/>
    <property type="match status" value="1"/>
</dbReference>
<dbReference type="Pfam" id="PF00005">
    <property type="entry name" value="ABC_tran"/>
    <property type="match status" value="1"/>
</dbReference>
<dbReference type="Pfam" id="PF02687">
    <property type="entry name" value="FtsX"/>
    <property type="match status" value="1"/>
</dbReference>
<dbReference type="Pfam" id="PF12704">
    <property type="entry name" value="MacB_PCD"/>
    <property type="match status" value="1"/>
</dbReference>
<dbReference type="SMART" id="SM00382">
    <property type="entry name" value="AAA"/>
    <property type="match status" value="1"/>
</dbReference>
<dbReference type="SUPFAM" id="SSF52540">
    <property type="entry name" value="P-loop containing nucleoside triphosphate hydrolases"/>
    <property type="match status" value="1"/>
</dbReference>
<dbReference type="PROSITE" id="PS00211">
    <property type="entry name" value="ABC_TRANSPORTER_1"/>
    <property type="match status" value="1"/>
</dbReference>
<dbReference type="PROSITE" id="PS50893">
    <property type="entry name" value="ABC_TRANSPORTER_2"/>
    <property type="match status" value="1"/>
</dbReference>
<dbReference type="PROSITE" id="PS51267">
    <property type="entry name" value="MACB"/>
    <property type="match status" value="1"/>
</dbReference>